<protein>
    <recommendedName>
        <fullName evidence="1">Histidine--tRNA ligase</fullName>
        <ecNumber evidence="1">6.1.1.21</ecNumber>
    </recommendedName>
    <alternativeName>
        <fullName evidence="1">Histidyl-tRNA synthetase</fullName>
        <shortName evidence="1">HisRS</shortName>
    </alternativeName>
</protein>
<feature type="chain" id="PRO_1000016457" description="Histidine--tRNA ligase">
    <location>
        <begin position="1"/>
        <end position="424"/>
    </location>
</feature>
<reference key="1">
    <citation type="journal article" date="2006" name="Genome Res.">
        <title>Massive genome erosion and functional adaptations provide insights into the symbiotic lifestyle of Sodalis glossinidius in the tsetse host.</title>
        <authorList>
            <person name="Toh H."/>
            <person name="Weiss B.L."/>
            <person name="Perkin S.A.H."/>
            <person name="Yamashita A."/>
            <person name="Oshima K."/>
            <person name="Hattori M."/>
            <person name="Aksoy S."/>
        </authorList>
    </citation>
    <scope>NUCLEOTIDE SEQUENCE [LARGE SCALE GENOMIC DNA]</scope>
    <source>
        <strain>morsitans</strain>
    </source>
</reference>
<comment type="catalytic activity">
    <reaction evidence="1">
        <text>tRNA(His) + L-histidine + ATP = L-histidyl-tRNA(His) + AMP + diphosphate + H(+)</text>
        <dbReference type="Rhea" id="RHEA:17313"/>
        <dbReference type="Rhea" id="RHEA-COMP:9665"/>
        <dbReference type="Rhea" id="RHEA-COMP:9689"/>
        <dbReference type="ChEBI" id="CHEBI:15378"/>
        <dbReference type="ChEBI" id="CHEBI:30616"/>
        <dbReference type="ChEBI" id="CHEBI:33019"/>
        <dbReference type="ChEBI" id="CHEBI:57595"/>
        <dbReference type="ChEBI" id="CHEBI:78442"/>
        <dbReference type="ChEBI" id="CHEBI:78527"/>
        <dbReference type="ChEBI" id="CHEBI:456215"/>
        <dbReference type="EC" id="6.1.1.21"/>
    </reaction>
</comment>
<comment type="subunit">
    <text evidence="1">Homodimer.</text>
</comment>
<comment type="subcellular location">
    <subcellularLocation>
        <location evidence="1">Cytoplasm</location>
    </subcellularLocation>
</comment>
<comment type="similarity">
    <text evidence="1">Belongs to the class-II aminoacyl-tRNA synthetase family.</text>
</comment>
<proteinExistence type="inferred from homology"/>
<organism>
    <name type="scientific">Sodalis glossinidius (strain morsitans)</name>
    <dbReference type="NCBI Taxonomy" id="343509"/>
    <lineage>
        <taxon>Bacteria</taxon>
        <taxon>Pseudomonadati</taxon>
        <taxon>Pseudomonadota</taxon>
        <taxon>Gammaproteobacteria</taxon>
        <taxon>Enterobacterales</taxon>
        <taxon>Bruguierivoracaceae</taxon>
        <taxon>Sodalis</taxon>
    </lineage>
</organism>
<name>SYH_SODGM</name>
<dbReference type="EC" id="6.1.1.21" evidence="1"/>
<dbReference type="EMBL" id="AP008232">
    <property type="protein sequence ID" value="BAE75034.1"/>
    <property type="molecule type" value="Genomic_DNA"/>
</dbReference>
<dbReference type="RefSeq" id="WP_011411583.1">
    <property type="nucleotide sequence ID" value="NC_007712.1"/>
</dbReference>
<dbReference type="SMR" id="Q2NS41"/>
<dbReference type="STRING" id="343509.SG1759"/>
<dbReference type="KEGG" id="sgl:SG1759"/>
<dbReference type="eggNOG" id="COG0124">
    <property type="taxonomic scope" value="Bacteria"/>
</dbReference>
<dbReference type="HOGENOM" id="CLU_025113_1_1_6"/>
<dbReference type="OrthoDB" id="9800814at2"/>
<dbReference type="BioCyc" id="SGLO343509:SGP1_RS16040-MONOMER"/>
<dbReference type="Proteomes" id="UP000001932">
    <property type="component" value="Chromosome"/>
</dbReference>
<dbReference type="GO" id="GO:0005737">
    <property type="term" value="C:cytoplasm"/>
    <property type="evidence" value="ECO:0007669"/>
    <property type="project" value="UniProtKB-SubCell"/>
</dbReference>
<dbReference type="GO" id="GO:0005524">
    <property type="term" value="F:ATP binding"/>
    <property type="evidence" value="ECO:0007669"/>
    <property type="project" value="UniProtKB-UniRule"/>
</dbReference>
<dbReference type="GO" id="GO:0004821">
    <property type="term" value="F:histidine-tRNA ligase activity"/>
    <property type="evidence" value="ECO:0007669"/>
    <property type="project" value="UniProtKB-UniRule"/>
</dbReference>
<dbReference type="GO" id="GO:0006427">
    <property type="term" value="P:histidyl-tRNA aminoacylation"/>
    <property type="evidence" value="ECO:0007669"/>
    <property type="project" value="UniProtKB-UniRule"/>
</dbReference>
<dbReference type="CDD" id="cd00773">
    <property type="entry name" value="HisRS-like_core"/>
    <property type="match status" value="1"/>
</dbReference>
<dbReference type="CDD" id="cd00859">
    <property type="entry name" value="HisRS_anticodon"/>
    <property type="match status" value="1"/>
</dbReference>
<dbReference type="FunFam" id="3.30.930.10:FF:000005">
    <property type="entry name" value="Histidine--tRNA ligase"/>
    <property type="match status" value="1"/>
</dbReference>
<dbReference type="Gene3D" id="3.40.50.800">
    <property type="entry name" value="Anticodon-binding domain"/>
    <property type="match status" value="1"/>
</dbReference>
<dbReference type="Gene3D" id="3.30.930.10">
    <property type="entry name" value="Bira Bifunctional Protein, Domain 2"/>
    <property type="match status" value="1"/>
</dbReference>
<dbReference type="HAMAP" id="MF_00127">
    <property type="entry name" value="His_tRNA_synth"/>
    <property type="match status" value="1"/>
</dbReference>
<dbReference type="InterPro" id="IPR006195">
    <property type="entry name" value="aa-tRNA-synth_II"/>
</dbReference>
<dbReference type="InterPro" id="IPR045864">
    <property type="entry name" value="aa-tRNA-synth_II/BPL/LPL"/>
</dbReference>
<dbReference type="InterPro" id="IPR004154">
    <property type="entry name" value="Anticodon-bd"/>
</dbReference>
<dbReference type="InterPro" id="IPR036621">
    <property type="entry name" value="Anticodon-bd_dom_sf"/>
</dbReference>
<dbReference type="InterPro" id="IPR015807">
    <property type="entry name" value="His-tRNA-ligase"/>
</dbReference>
<dbReference type="InterPro" id="IPR041715">
    <property type="entry name" value="HisRS-like_core"/>
</dbReference>
<dbReference type="InterPro" id="IPR004516">
    <property type="entry name" value="HisRS/HisZ"/>
</dbReference>
<dbReference type="InterPro" id="IPR033656">
    <property type="entry name" value="HisRS_anticodon"/>
</dbReference>
<dbReference type="NCBIfam" id="TIGR00442">
    <property type="entry name" value="hisS"/>
    <property type="match status" value="1"/>
</dbReference>
<dbReference type="PANTHER" id="PTHR43707:SF1">
    <property type="entry name" value="HISTIDINE--TRNA LIGASE, MITOCHONDRIAL-RELATED"/>
    <property type="match status" value="1"/>
</dbReference>
<dbReference type="PANTHER" id="PTHR43707">
    <property type="entry name" value="HISTIDYL-TRNA SYNTHETASE"/>
    <property type="match status" value="1"/>
</dbReference>
<dbReference type="Pfam" id="PF03129">
    <property type="entry name" value="HGTP_anticodon"/>
    <property type="match status" value="1"/>
</dbReference>
<dbReference type="Pfam" id="PF13393">
    <property type="entry name" value="tRNA-synt_His"/>
    <property type="match status" value="1"/>
</dbReference>
<dbReference type="PIRSF" id="PIRSF001549">
    <property type="entry name" value="His-tRNA_synth"/>
    <property type="match status" value="1"/>
</dbReference>
<dbReference type="SUPFAM" id="SSF52954">
    <property type="entry name" value="Class II aaRS ABD-related"/>
    <property type="match status" value="1"/>
</dbReference>
<dbReference type="SUPFAM" id="SSF55681">
    <property type="entry name" value="Class II aaRS and biotin synthetases"/>
    <property type="match status" value="1"/>
</dbReference>
<dbReference type="PROSITE" id="PS50862">
    <property type="entry name" value="AA_TRNA_LIGASE_II"/>
    <property type="match status" value="1"/>
</dbReference>
<evidence type="ECO:0000255" key="1">
    <source>
        <dbReference type="HAMAP-Rule" id="MF_00127"/>
    </source>
</evidence>
<accession>Q2NS41</accession>
<gene>
    <name evidence="1" type="primary">hisS</name>
    <name type="ordered locus">SG1759</name>
</gene>
<keyword id="KW-0030">Aminoacyl-tRNA synthetase</keyword>
<keyword id="KW-0067">ATP-binding</keyword>
<keyword id="KW-0963">Cytoplasm</keyword>
<keyword id="KW-0436">Ligase</keyword>
<keyword id="KW-0547">Nucleotide-binding</keyword>
<keyword id="KW-0648">Protein biosynthesis</keyword>
<sequence length="424" mass="47071">MAKNIQAIRGMNDYLPEETAFWQCVEGTLKNVLASYGYSEIRLPIVEQTPLFQRAIGEVTDVVEKEMYTFADRNGDSLTLRPEGTAGCVRAGIEHGLLYNQEQRLWYVGPMFRYERPQKGRYRQFHQMGAEVFGQQGPDVDAELILLTARWWRALGIQEHVALELNSIGSLEACARYREALVAFLRQHEDRLDEDCRRRMHTNPMRVLDTKNPDIQVLLNDAPVLTDYLDDDSQAHFSGLCELLDLAGIPYTVNPRLVRGLDYYNRTVFEWVTTRLGSQGTVCGGGRYDGLVEQLGGRATPAVGFAMGLERLVLLVQAVNPDFAAAARVDAYLVAAGDGVQREALRLAEQLRDELSSLRLMTNYGGGSFKKQFGRADKHGARIALVLGESEAAAGQVVVKDLATGNQETLAQSDVAARLASILG</sequence>